<dbReference type="EC" id="4.2.1.109" evidence="1"/>
<dbReference type="EMBL" id="CH379064">
    <property type="protein sequence ID" value="EAL31653.2"/>
    <property type="molecule type" value="Genomic_DNA"/>
</dbReference>
<dbReference type="RefSeq" id="XP_001354599.2">
    <property type="nucleotide sequence ID" value="XM_001354563.3"/>
</dbReference>
<dbReference type="SMR" id="Q29HV4"/>
<dbReference type="FunCoup" id="Q29HV4">
    <property type="interactions" value="950"/>
</dbReference>
<dbReference type="STRING" id="46245.Q29HV4"/>
<dbReference type="EnsemblMetazoa" id="FBtr0287514">
    <property type="protein sequence ID" value="FBpp0285952"/>
    <property type="gene ID" value="FBgn0070839"/>
</dbReference>
<dbReference type="KEGG" id="dpo:4815319"/>
<dbReference type="eggNOG" id="KOG2631">
    <property type="taxonomic scope" value="Eukaryota"/>
</dbReference>
<dbReference type="HOGENOM" id="CLU_006033_4_0_1"/>
<dbReference type="InParanoid" id="Q29HV4"/>
<dbReference type="OMA" id="WFPGTSG"/>
<dbReference type="UniPathway" id="UPA00904">
    <property type="reaction ID" value="UER00875"/>
</dbReference>
<dbReference type="Proteomes" id="UP000001819">
    <property type="component" value="Chromosome X"/>
</dbReference>
<dbReference type="Bgee" id="FBgn0070839">
    <property type="expression patterns" value="Expressed in female reproductive system and 2 other cell types or tissues"/>
</dbReference>
<dbReference type="GO" id="GO:0005737">
    <property type="term" value="C:cytoplasm"/>
    <property type="evidence" value="ECO:0007669"/>
    <property type="project" value="UniProtKB-SubCell"/>
</dbReference>
<dbReference type="GO" id="GO:0046570">
    <property type="term" value="F:methylthioribulose 1-phosphate dehydratase activity"/>
    <property type="evidence" value="ECO:0000250"/>
    <property type="project" value="UniProtKB"/>
</dbReference>
<dbReference type="GO" id="GO:0008270">
    <property type="term" value="F:zinc ion binding"/>
    <property type="evidence" value="ECO:0000250"/>
    <property type="project" value="UniProtKB"/>
</dbReference>
<dbReference type="GO" id="GO:0019509">
    <property type="term" value="P:L-methionine salvage from methylthioadenosine"/>
    <property type="evidence" value="ECO:0007669"/>
    <property type="project" value="UniProtKB-UniRule"/>
</dbReference>
<dbReference type="FunFam" id="3.40.225.10:FF:000003">
    <property type="entry name" value="Methylthioribulose-1-phosphate dehydratase"/>
    <property type="match status" value="1"/>
</dbReference>
<dbReference type="Gene3D" id="3.40.225.10">
    <property type="entry name" value="Class II aldolase/adducin N-terminal domain"/>
    <property type="match status" value="1"/>
</dbReference>
<dbReference type="HAMAP" id="MF_03116">
    <property type="entry name" value="Salvage_MtnB_euk"/>
    <property type="match status" value="1"/>
</dbReference>
<dbReference type="InterPro" id="IPR001303">
    <property type="entry name" value="Aldolase_II/adducin_N"/>
</dbReference>
<dbReference type="InterPro" id="IPR036409">
    <property type="entry name" value="Aldolase_II/adducin_N_sf"/>
</dbReference>
<dbReference type="InterPro" id="IPR017714">
    <property type="entry name" value="MethylthioRu-1-P_deHdtase_MtnB"/>
</dbReference>
<dbReference type="InterPro" id="IPR027514">
    <property type="entry name" value="Salvage_MtnB_euk"/>
</dbReference>
<dbReference type="NCBIfam" id="TIGR03328">
    <property type="entry name" value="salvage_mtnB"/>
    <property type="match status" value="1"/>
</dbReference>
<dbReference type="PANTHER" id="PTHR10640">
    <property type="entry name" value="METHYLTHIORIBULOSE-1-PHOSPHATE DEHYDRATASE"/>
    <property type="match status" value="1"/>
</dbReference>
<dbReference type="PANTHER" id="PTHR10640:SF7">
    <property type="entry name" value="METHYLTHIORIBULOSE-1-PHOSPHATE DEHYDRATASE"/>
    <property type="match status" value="1"/>
</dbReference>
<dbReference type="Pfam" id="PF00596">
    <property type="entry name" value="Aldolase_II"/>
    <property type="match status" value="1"/>
</dbReference>
<dbReference type="SMART" id="SM01007">
    <property type="entry name" value="Aldolase_II"/>
    <property type="match status" value="1"/>
</dbReference>
<dbReference type="SUPFAM" id="SSF53639">
    <property type="entry name" value="AraD/HMP-PK domain-like"/>
    <property type="match status" value="1"/>
</dbReference>
<accession>Q29HV4</accession>
<name>MTNB_DROPS</name>
<comment type="function">
    <text evidence="1">Catalyzes the dehydration of methylthioribulose-1-phosphate (MTRu-1-P) into 2,3-diketo-5-methylthiopentyl-1-phosphate (DK-MTP-1-P).</text>
</comment>
<comment type="catalytic activity">
    <reaction evidence="1">
        <text>5-(methylsulfanyl)-D-ribulose 1-phosphate = 5-methylsulfanyl-2,3-dioxopentyl phosphate + H2O</text>
        <dbReference type="Rhea" id="RHEA:15549"/>
        <dbReference type="ChEBI" id="CHEBI:15377"/>
        <dbReference type="ChEBI" id="CHEBI:58548"/>
        <dbReference type="ChEBI" id="CHEBI:58828"/>
        <dbReference type="EC" id="4.2.1.109"/>
    </reaction>
</comment>
<comment type="cofactor">
    <cofactor evidence="1">
        <name>Zn(2+)</name>
        <dbReference type="ChEBI" id="CHEBI:29105"/>
    </cofactor>
    <text evidence="1">Binds 1 zinc ion per subunit.</text>
</comment>
<comment type="pathway">
    <text evidence="1">Amino-acid biosynthesis; L-methionine biosynthesis via salvage pathway; L-methionine from S-methyl-5-thio-alpha-D-ribose 1-phosphate: step 2/6.</text>
</comment>
<comment type="subcellular location">
    <subcellularLocation>
        <location evidence="1">Cytoplasm</location>
    </subcellularLocation>
</comment>
<comment type="similarity">
    <text evidence="1">Belongs to the aldolase class II family. MtnB subfamily.</text>
</comment>
<proteinExistence type="inferred from homology"/>
<keyword id="KW-0028">Amino-acid biosynthesis</keyword>
<keyword id="KW-0963">Cytoplasm</keyword>
<keyword id="KW-0456">Lyase</keyword>
<keyword id="KW-0479">Metal-binding</keyword>
<keyword id="KW-0486">Methionine biosynthesis</keyword>
<keyword id="KW-1185">Reference proteome</keyword>
<keyword id="KW-0862">Zinc</keyword>
<sequence length="230" mass="26276">MSCSIFKDLPEDHPRRLIPALCRQFYHLGWVTGTGGGMSIKLNNEIYIAPSGVQKERMQPEDLFVQDIDGKDLQMPPEIRELKKSQCTPLFMLAYRHRNAGAVIHTHSQHAVMATLLWPGKTFRCTHLEMIKGVYDDADKRYLQYDEQLVVPIIENTPHERDLADSMYAAMMEHPGCSAVLVRRHGVYVWGQTWEKAKAISECYDYLFSIAVEMKKAGLDPETFEDASKA</sequence>
<evidence type="ECO:0000255" key="1">
    <source>
        <dbReference type="HAMAP-Rule" id="MF_03116"/>
    </source>
</evidence>
<gene>
    <name type="ORF">GA10783</name>
</gene>
<organism>
    <name type="scientific">Drosophila pseudoobscura pseudoobscura</name>
    <name type="common">Fruit fly</name>
    <dbReference type="NCBI Taxonomy" id="46245"/>
    <lineage>
        <taxon>Eukaryota</taxon>
        <taxon>Metazoa</taxon>
        <taxon>Ecdysozoa</taxon>
        <taxon>Arthropoda</taxon>
        <taxon>Hexapoda</taxon>
        <taxon>Insecta</taxon>
        <taxon>Pterygota</taxon>
        <taxon>Neoptera</taxon>
        <taxon>Endopterygota</taxon>
        <taxon>Diptera</taxon>
        <taxon>Brachycera</taxon>
        <taxon>Muscomorpha</taxon>
        <taxon>Ephydroidea</taxon>
        <taxon>Drosophilidae</taxon>
        <taxon>Drosophila</taxon>
        <taxon>Sophophora</taxon>
    </lineage>
</organism>
<feature type="chain" id="PRO_0000393786" description="Probable methylthioribulose-1-phosphate dehydratase">
    <location>
        <begin position="1"/>
        <end position="230"/>
    </location>
</feature>
<feature type="active site" description="Proton donor/acceptor" evidence="1">
    <location>
        <position position="129"/>
    </location>
</feature>
<feature type="binding site" evidence="1">
    <location>
        <position position="87"/>
    </location>
    <ligand>
        <name>substrate</name>
    </ligand>
</feature>
<feature type="binding site" evidence="1">
    <location>
        <position position="105"/>
    </location>
    <ligand>
        <name>Zn(2+)</name>
        <dbReference type="ChEBI" id="CHEBI:29105"/>
    </ligand>
</feature>
<feature type="binding site" evidence="1">
    <location>
        <position position="107"/>
    </location>
    <ligand>
        <name>Zn(2+)</name>
        <dbReference type="ChEBI" id="CHEBI:29105"/>
    </ligand>
</feature>
<feature type="binding site" evidence="1">
    <location>
        <position position="185"/>
    </location>
    <ligand>
        <name>Zn(2+)</name>
        <dbReference type="ChEBI" id="CHEBI:29105"/>
    </ligand>
</feature>
<protein>
    <recommendedName>
        <fullName evidence="1">Probable methylthioribulose-1-phosphate dehydratase</fullName>
        <shortName evidence="1">MTRu-1-P dehydratase</shortName>
        <ecNumber evidence="1">4.2.1.109</ecNumber>
    </recommendedName>
</protein>
<reference key="1">
    <citation type="journal article" date="2005" name="Genome Res.">
        <title>Comparative genome sequencing of Drosophila pseudoobscura: chromosomal, gene, and cis-element evolution.</title>
        <authorList>
            <person name="Richards S."/>
            <person name="Liu Y."/>
            <person name="Bettencourt B.R."/>
            <person name="Hradecky P."/>
            <person name="Letovsky S."/>
            <person name="Nielsen R."/>
            <person name="Thornton K."/>
            <person name="Hubisz M.J."/>
            <person name="Chen R."/>
            <person name="Meisel R.P."/>
            <person name="Couronne O."/>
            <person name="Hua S."/>
            <person name="Smith M.A."/>
            <person name="Zhang P."/>
            <person name="Liu J."/>
            <person name="Bussemaker H.J."/>
            <person name="van Batenburg M.F."/>
            <person name="Howells S.L."/>
            <person name="Scherer S.E."/>
            <person name="Sodergren E."/>
            <person name="Matthews B.B."/>
            <person name="Crosby M.A."/>
            <person name="Schroeder A.J."/>
            <person name="Ortiz-Barrientos D."/>
            <person name="Rives C.M."/>
            <person name="Metzker M.L."/>
            <person name="Muzny D.M."/>
            <person name="Scott G."/>
            <person name="Steffen D."/>
            <person name="Wheeler D.A."/>
            <person name="Worley K.C."/>
            <person name="Havlak P."/>
            <person name="Durbin K.J."/>
            <person name="Egan A."/>
            <person name="Gill R."/>
            <person name="Hume J."/>
            <person name="Morgan M.B."/>
            <person name="Miner G."/>
            <person name="Hamilton C."/>
            <person name="Huang Y."/>
            <person name="Waldron L."/>
            <person name="Verduzco D."/>
            <person name="Clerc-Blankenburg K.P."/>
            <person name="Dubchak I."/>
            <person name="Noor M.A.F."/>
            <person name="Anderson W."/>
            <person name="White K.P."/>
            <person name="Clark A.G."/>
            <person name="Schaeffer S.W."/>
            <person name="Gelbart W.M."/>
            <person name="Weinstock G.M."/>
            <person name="Gibbs R.A."/>
        </authorList>
    </citation>
    <scope>NUCLEOTIDE SEQUENCE [LARGE SCALE GENOMIC DNA]</scope>
    <source>
        <strain>MV2-25 / Tucson 14011-0121.94</strain>
    </source>
</reference>